<organism>
    <name type="scientific">Mus musculus</name>
    <name type="common">Mouse</name>
    <dbReference type="NCBI Taxonomy" id="10090"/>
    <lineage>
        <taxon>Eukaryota</taxon>
        <taxon>Metazoa</taxon>
        <taxon>Chordata</taxon>
        <taxon>Craniata</taxon>
        <taxon>Vertebrata</taxon>
        <taxon>Euteleostomi</taxon>
        <taxon>Mammalia</taxon>
        <taxon>Eutheria</taxon>
        <taxon>Euarchontoglires</taxon>
        <taxon>Glires</taxon>
        <taxon>Rodentia</taxon>
        <taxon>Myomorpha</taxon>
        <taxon>Muroidea</taxon>
        <taxon>Muridae</taxon>
        <taxon>Murinae</taxon>
        <taxon>Mus</taxon>
        <taxon>Mus</taxon>
    </lineage>
</organism>
<sequence length="1341" mass="151457">MKRVFSLLEKSWLGAPIQFAWQKSSGNYLAVTGADYIVKIFDRHGQKRSEISLPGNCVTMDWDKDGDILAVIAEKSSCIYLWDANTNKTSQLDNGMRDQMSFLLWSKIGSFLAVGTIKGNLLIYNHQTSRKIPVLGKHTKKITCGCWNSENLLALGGEDKMITVSNQEGDTIRQTPVKSEPSDIKFSMSKTDERISSAENTISAVVGKKMLFLFHLNEPDNPVDLEFQQAYGNIVCYSWYGDGYIMIGFSRGTFLAISTHFPEVGQEIFKARDHKDNLTSVALSQTLNKAATCGDNCIKIHDLTELRDMYAIINLDDENKGLGTLSWTDDGQLLALSTQRGSLHVFLTKLPILGDACHTRIAYLTSLLEVTVANLIEGEPPITVSVDVEPTFVAVGLYHLAVGMNNRAWFYVLGENVVKKLKDVEYLGTVASICLHSDYAAALFEGKIQLHLIENEMLDAQEERETRLFPAVDDKCRILCHALTSDFLIYGTDTGIIHYFFIEDWQFVNDYRHPVGVKKLFPDPNGTRLVFIDEKSDGFVYCPVNDATYEIPDFSPTIKGVLWENWPMDKGVFIAYDDDKVYTYAFHKDTIQGSKVILAGSTKLPFSHKPLLLYNGELTCQTQSGKINSIYLSTHSFLGSMKDTEPTDLRQMLTQTLLLKRFSDAWDICKMLNDRTSWSELAKACLHHMEVEFAIRVSRTMGDVGTVMSLEQIKGIEDYNLLAGHLAMFTNDFNLAQDLYLASNCPVAALEMRRDLQHWDSALQLAKRLAPDQIPFISKEYAIQLEFTGDYVNALAHYEKGITGDNKEHDEVCLAGVAQMSIRMGDIRRGANQALKHPSRVLKRDCGAILENMKQFSEAAQLYEKGQYYDRAASVYIRCKNWAKVGELLPHVSSPKIHLQYAKAKEADGRYKEAVVAYENAKQWNSVIRIYLDHLNNPEKAVSIVRETQSLDGAKMVARFFLQLGDYGSAIQFLVLSKCNNEAFTLAQQHNKMEIYADIIGAEDTTNEDYQSIALYFEGEKRHFQAGKFFLLCGQYSRALKHFLKCPSSEDNVAIEMAIETVGQAKDELLTNQLIDHLMGESDGMPKDAKYLFRLYMALKQYREAARTAIIIAREEQSAGNYRNAHDVLFSMYAELKAQKIKIPSEMATNLMILHSYILVKIHVKSGDHMKGARMLIRVANNISKFPSHIVPILTSTVIECHRAGLKNSAFSFAAMLMRPEYRNKIDAKYKKKIEAMVRRPDTSETEEATTPCPFCQFLLPECELLCPGCKNNIPYCIATGRHMLKDDWTMCPHCGFPALYSEFKILLNSESTCPMCSERLNSSQLKKITDCSQYLRTEME</sequence>
<protein>
    <recommendedName>
        <fullName evidence="10">WD repeat-containing protein 19</fullName>
    </recommendedName>
    <alternativeName>
        <fullName>Intraflagellar transport 144 homolog</fullName>
    </alternativeName>
</protein>
<proteinExistence type="evidence at protein level"/>
<evidence type="ECO:0000250" key="1">
    <source>
        <dbReference type="UniProtKB" id="Q8NEZ3"/>
    </source>
</evidence>
<evidence type="ECO:0000269" key="2">
    <source>
    </source>
</evidence>
<evidence type="ECO:0000269" key="3">
    <source>
    </source>
</evidence>
<evidence type="ECO:0000269" key="4">
    <source>
    </source>
</evidence>
<evidence type="ECO:0000269" key="5">
    <source>
    </source>
</evidence>
<evidence type="ECO:0000269" key="6">
    <source>
    </source>
</evidence>
<evidence type="ECO:0000303" key="7">
    <source>
    </source>
</evidence>
<evidence type="ECO:0000303" key="8">
    <source>
    </source>
</evidence>
<evidence type="ECO:0000303" key="9">
    <source>
    </source>
</evidence>
<evidence type="ECO:0000305" key="10"/>
<evidence type="ECO:0000305" key="11">
    <source>
    </source>
</evidence>
<evidence type="ECO:0000312" key="12">
    <source>
        <dbReference type="MGI" id="MGI:2443231"/>
    </source>
</evidence>
<reference key="1">
    <citation type="journal article" date="2003" name="Genomics">
        <title>Isolation and characterization of human and mouse WDR19,a novel WD-repeat protein exhibiting androgen-regulated expression in prostate epithelium.</title>
        <authorList>
            <person name="Lin B."/>
            <person name="White J.T."/>
            <person name="Utleg A.G."/>
            <person name="Wang S."/>
            <person name="Ferguson C."/>
            <person name="True L.D."/>
            <person name="Vessella R."/>
            <person name="Hood L."/>
            <person name="Nelson P.S."/>
        </authorList>
    </citation>
    <scope>NUCLEOTIDE SEQUENCE [MRNA]</scope>
    <scope>TISSUE SPECIFICITY</scope>
    <source>
        <strain>BALB/cJ</strain>
    </source>
</reference>
<reference key="2">
    <citation type="journal article" date="2005" name="Science">
        <title>The transcriptional landscape of the mammalian genome.</title>
        <authorList>
            <person name="Carninci P."/>
            <person name="Kasukawa T."/>
            <person name="Katayama S."/>
            <person name="Gough J."/>
            <person name="Frith M.C."/>
            <person name="Maeda N."/>
            <person name="Oyama R."/>
            <person name="Ravasi T."/>
            <person name="Lenhard B."/>
            <person name="Wells C."/>
            <person name="Kodzius R."/>
            <person name="Shimokawa K."/>
            <person name="Bajic V.B."/>
            <person name="Brenner S.E."/>
            <person name="Batalov S."/>
            <person name="Forrest A.R."/>
            <person name="Zavolan M."/>
            <person name="Davis M.J."/>
            <person name="Wilming L.G."/>
            <person name="Aidinis V."/>
            <person name="Allen J.E."/>
            <person name="Ambesi-Impiombato A."/>
            <person name="Apweiler R."/>
            <person name="Aturaliya R.N."/>
            <person name="Bailey T.L."/>
            <person name="Bansal M."/>
            <person name="Baxter L."/>
            <person name="Beisel K.W."/>
            <person name="Bersano T."/>
            <person name="Bono H."/>
            <person name="Chalk A.M."/>
            <person name="Chiu K.P."/>
            <person name="Choudhary V."/>
            <person name="Christoffels A."/>
            <person name="Clutterbuck D.R."/>
            <person name="Crowe M.L."/>
            <person name="Dalla E."/>
            <person name="Dalrymple B.P."/>
            <person name="de Bono B."/>
            <person name="Della Gatta G."/>
            <person name="di Bernardo D."/>
            <person name="Down T."/>
            <person name="Engstrom P."/>
            <person name="Fagiolini M."/>
            <person name="Faulkner G."/>
            <person name="Fletcher C.F."/>
            <person name="Fukushima T."/>
            <person name="Furuno M."/>
            <person name="Futaki S."/>
            <person name="Gariboldi M."/>
            <person name="Georgii-Hemming P."/>
            <person name="Gingeras T.R."/>
            <person name="Gojobori T."/>
            <person name="Green R.E."/>
            <person name="Gustincich S."/>
            <person name="Harbers M."/>
            <person name="Hayashi Y."/>
            <person name="Hensch T.K."/>
            <person name="Hirokawa N."/>
            <person name="Hill D."/>
            <person name="Huminiecki L."/>
            <person name="Iacono M."/>
            <person name="Ikeo K."/>
            <person name="Iwama A."/>
            <person name="Ishikawa T."/>
            <person name="Jakt M."/>
            <person name="Kanapin A."/>
            <person name="Katoh M."/>
            <person name="Kawasawa Y."/>
            <person name="Kelso J."/>
            <person name="Kitamura H."/>
            <person name="Kitano H."/>
            <person name="Kollias G."/>
            <person name="Krishnan S.P."/>
            <person name="Kruger A."/>
            <person name="Kummerfeld S.K."/>
            <person name="Kurochkin I.V."/>
            <person name="Lareau L.F."/>
            <person name="Lazarevic D."/>
            <person name="Lipovich L."/>
            <person name="Liu J."/>
            <person name="Liuni S."/>
            <person name="McWilliam S."/>
            <person name="Madan Babu M."/>
            <person name="Madera M."/>
            <person name="Marchionni L."/>
            <person name="Matsuda H."/>
            <person name="Matsuzawa S."/>
            <person name="Miki H."/>
            <person name="Mignone F."/>
            <person name="Miyake S."/>
            <person name="Morris K."/>
            <person name="Mottagui-Tabar S."/>
            <person name="Mulder N."/>
            <person name="Nakano N."/>
            <person name="Nakauchi H."/>
            <person name="Ng P."/>
            <person name="Nilsson R."/>
            <person name="Nishiguchi S."/>
            <person name="Nishikawa S."/>
            <person name="Nori F."/>
            <person name="Ohara O."/>
            <person name="Okazaki Y."/>
            <person name="Orlando V."/>
            <person name="Pang K.C."/>
            <person name="Pavan W.J."/>
            <person name="Pavesi G."/>
            <person name="Pesole G."/>
            <person name="Petrovsky N."/>
            <person name="Piazza S."/>
            <person name="Reed J."/>
            <person name="Reid J.F."/>
            <person name="Ring B.Z."/>
            <person name="Ringwald M."/>
            <person name="Rost B."/>
            <person name="Ruan Y."/>
            <person name="Salzberg S.L."/>
            <person name="Sandelin A."/>
            <person name="Schneider C."/>
            <person name="Schoenbach C."/>
            <person name="Sekiguchi K."/>
            <person name="Semple C.A."/>
            <person name="Seno S."/>
            <person name="Sessa L."/>
            <person name="Sheng Y."/>
            <person name="Shibata Y."/>
            <person name="Shimada H."/>
            <person name="Shimada K."/>
            <person name="Silva D."/>
            <person name="Sinclair B."/>
            <person name="Sperling S."/>
            <person name="Stupka E."/>
            <person name="Sugiura K."/>
            <person name="Sultana R."/>
            <person name="Takenaka Y."/>
            <person name="Taki K."/>
            <person name="Tammoja K."/>
            <person name="Tan S.L."/>
            <person name="Tang S."/>
            <person name="Taylor M.S."/>
            <person name="Tegner J."/>
            <person name="Teichmann S.A."/>
            <person name="Ueda H.R."/>
            <person name="van Nimwegen E."/>
            <person name="Verardo R."/>
            <person name="Wei C.L."/>
            <person name="Yagi K."/>
            <person name="Yamanishi H."/>
            <person name="Zabarovsky E."/>
            <person name="Zhu S."/>
            <person name="Zimmer A."/>
            <person name="Hide W."/>
            <person name="Bult C."/>
            <person name="Grimmond S.M."/>
            <person name="Teasdale R.D."/>
            <person name="Liu E.T."/>
            <person name="Brusic V."/>
            <person name="Quackenbush J."/>
            <person name="Wahlestedt C."/>
            <person name="Mattick J.S."/>
            <person name="Hume D.A."/>
            <person name="Kai C."/>
            <person name="Sasaki D."/>
            <person name="Tomaru Y."/>
            <person name="Fukuda S."/>
            <person name="Kanamori-Katayama M."/>
            <person name="Suzuki M."/>
            <person name="Aoki J."/>
            <person name="Arakawa T."/>
            <person name="Iida J."/>
            <person name="Imamura K."/>
            <person name="Itoh M."/>
            <person name="Kato T."/>
            <person name="Kawaji H."/>
            <person name="Kawagashira N."/>
            <person name="Kawashima T."/>
            <person name="Kojima M."/>
            <person name="Kondo S."/>
            <person name="Konno H."/>
            <person name="Nakano K."/>
            <person name="Ninomiya N."/>
            <person name="Nishio T."/>
            <person name="Okada M."/>
            <person name="Plessy C."/>
            <person name="Shibata K."/>
            <person name="Shiraki T."/>
            <person name="Suzuki S."/>
            <person name="Tagami M."/>
            <person name="Waki K."/>
            <person name="Watahiki A."/>
            <person name="Okamura-Oho Y."/>
            <person name="Suzuki H."/>
            <person name="Kawai J."/>
            <person name="Hayashizaki Y."/>
        </authorList>
    </citation>
    <scope>NUCLEOTIDE SEQUENCE [LARGE SCALE MRNA] (ISOFORM 2)</scope>
    <source>
        <strain>C57BL/6J</strain>
        <tissue>Heart</tissue>
        <tissue>Melanocyte</tissue>
    </source>
</reference>
<reference key="3">
    <citation type="journal article" date="2003" name="DNA Res.">
        <title>Prediction of the coding sequences of mouse homologues of KIAA gene: III. The complete nucleotide sequences of 500 mouse KIAA-homologous cDNAs identified by screening of terminal sequences of cDNA clones randomly sampled from size-fractionated libraries.</title>
        <authorList>
            <person name="Okazaki N."/>
            <person name="Kikuno R."/>
            <person name="Ohara R."/>
            <person name="Inamoto S."/>
            <person name="Koseki H."/>
            <person name="Hiraoka S."/>
            <person name="Saga Y."/>
            <person name="Nagase T."/>
            <person name="Ohara O."/>
            <person name="Koga H."/>
        </authorList>
    </citation>
    <scope>NUCLEOTIDE SEQUENCE [LARGE SCALE MRNA] OF 335-1239 (ISOFORM 3)</scope>
    <source>
        <tissue>Brain</tissue>
    </source>
</reference>
<reference key="4">
    <citation type="submission" date="2004-01" db="EMBL/GenBank/DDBJ databases">
        <authorList>
            <person name="Okazaki N."/>
            <person name="Kikuno R."/>
            <person name="Ohara R."/>
            <person name="Inamoto S."/>
            <person name="Koseki H."/>
            <person name="Hiraoka S."/>
            <person name="Saga Y."/>
            <person name="Nagase T."/>
            <person name="Ohara O."/>
            <person name="Koga H."/>
        </authorList>
    </citation>
    <scope>SEQUENCE REVISION</scope>
</reference>
<reference key="5">
    <citation type="journal article" date="2004" name="Genome Res.">
        <title>The status, quality, and expansion of the NIH full-length cDNA project: the Mammalian Gene Collection (MGC).</title>
        <authorList>
            <consortium name="The MGC Project Team"/>
        </authorList>
    </citation>
    <scope>NUCLEOTIDE SEQUENCE [LARGE SCALE MRNA] OF 581-1341</scope>
    <source>
        <strain>NMRI</strain>
        <tissue>Mammary tumor</tissue>
    </source>
</reference>
<reference key="6">
    <citation type="journal article" date="2006" name="Mol. Biol. Cell">
        <title>Caenorhabditis elegans DYF-2, an orthologue of human WDR19, is a component of the intraflagellar transport machinery in sensory cilia.</title>
        <authorList>
            <person name="Efimenko E."/>
            <person name="Blacque O.E."/>
            <person name="Ou G."/>
            <person name="Haycraft C.J."/>
            <person name="Yoder B.K."/>
            <person name="Scholey J.M."/>
            <person name="Leroux M.R."/>
            <person name="Swoboda P."/>
        </authorList>
    </citation>
    <scope>FUNCTION</scope>
    <scope>SUBCELLULAR LOCATION</scope>
    <scope>TISSUE SPECIFICITY</scope>
</reference>
<reference key="7">
    <citation type="journal article" date="2009" name="Hum. Mol. Genet.">
        <title>Essential role of nephrocystin in photoreceptor intraflagellar transport in mouse.</title>
        <authorList>
            <person name="Jiang S.T."/>
            <person name="Chiou Y.Y."/>
            <person name="Wang E."/>
            <person name="Chien Y.L."/>
            <person name="Ho H.H."/>
            <person name="Tsai F.J."/>
            <person name="Lin C.Y."/>
            <person name="Tsai S.P."/>
            <person name="Li H."/>
        </authorList>
    </citation>
    <scope>SUBCELLULAR LOCATION</scope>
</reference>
<reference key="8">
    <citation type="journal article" date="2010" name="Cell">
        <title>A tissue-specific atlas of mouse protein phosphorylation and expression.</title>
        <authorList>
            <person name="Huttlin E.L."/>
            <person name="Jedrychowski M.P."/>
            <person name="Elias J.E."/>
            <person name="Goswami T."/>
            <person name="Rad R."/>
            <person name="Beausoleil S.A."/>
            <person name="Villen J."/>
            <person name="Haas W."/>
            <person name="Sowa M.E."/>
            <person name="Gygi S.P."/>
        </authorList>
    </citation>
    <scope>IDENTIFICATION BY MASS SPECTROMETRY [LARGE SCALE ANALYSIS]</scope>
    <source>
        <tissue>Testis</tissue>
    </source>
</reference>
<reference key="9">
    <citation type="journal article" date="2012" name="Nat. Cell Biol.">
        <title>The BBSome controls IFT assembly and turnaround in cilia.</title>
        <authorList>
            <person name="Wei Q."/>
            <person name="Zhang Y."/>
            <person name="Li Y."/>
            <person name="Zhang Q."/>
            <person name="Ling K."/>
            <person name="Hu J."/>
        </authorList>
    </citation>
    <scope>FUNCTION</scope>
    <scope>INTERACTION WITH BBS1</scope>
    <scope>MUTAGENESIS OF GLY-341</scope>
</reference>
<reference key="10">
    <citation type="journal article" date="2015" name="PLoS ONE">
        <title>Characterization of tetratricopeptide repeat-containing proteins critical for cilia formation and function.</title>
        <authorList>
            <person name="Xu Y."/>
            <person name="Cao J."/>
            <person name="Huang S."/>
            <person name="Feng D."/>
            <person name="Zhang W."/>
            <person name="Zhu X."/>
            <person name="Yan X."/>
        </authorList>
    </citation>
    <scope>INTERACTION WITH TTC25</scope>
</reference>
<comment type="function">
    <text evidence="1 5 11">As component of the IFT complex A (IFT-A), a complex required for retrograde ciliary transport and entry into cilia of G protein-coupled receptors (GPCRs), it is involved in cilia function and/or assembly (Probable). Essential for functional IFT-A assembly and ciliary entry of GPCRs (By similarity). Associates with the BBSome complex to mediate ciliary transport (PubMed:22922713).</text>
</comment>
<comment type="subunit">
    <text evidence="1 5 6">Component of the IFT complex A (IFT-A) complex. IFT-A complex is divided into a core subcomplex composed of IFT122:IFT140:WDR19 which is associated with TULP3 and a peripheral subcomplex composed of IFT43:WDR35:TTC21B (By similarity). Interacts (via C-terminal region) with IFT122 (via C-terminal region) (By similarity). Interacts with BBS1 (PubMed:22922713). Interacts with TTC25 (PubMed:25860617).</text>
</comment>
<comment type="subcellular location">
    <subcellularLocation>
        <location evidence="3">Cell projection</location>
        <location evidence="3">Cilium</location>
    </subcellularLocation>
    <subcellularLocation>
        <location evidence="3">Cytoplasm</location>
        <location evidence="3">Cytoskeleton</location>
        <location evidence="3">Cilium basal body</location>
    </subcellularLocation>
    <subcellularLocation>
        <location evidence="4">Cell projection</location>
        <location evidence="4">Cilium</location>
        <location evidence="4">Photoreceptor outer segment</location>
    </subcellularLocation>
    <subcellularLocation>
        <location evidence="1">Cell projection</location>
        <location evidence="1">Cilium</location>
        <location evidence="1">Flagellum</location>
    </subcellularLocation>
    <text evidence="1 3 4">Localizes to photoreceptor connecting cilia, to the base of motile cilia in brain ependymal cells and to the base of and along primary cilia in cultured kidney inner mnedullary collecting duct (IMCD) cells. Localizes at the sperm neck and flagellum (By similarity).</text>
</comment>
<comment type="alternative products">
    <event type="alternative splicing"/>
    <isoform>
        <id>Q3UGF1-1</id>
        <name>1</name>
        <sequence type="displayed"/>
    </isoform>
    <isoform>
        <id>Q3UGF1-2</id>
        <name>2</name>
        <sequence type="described" ref="VSP_018075"/>
    </isoform>
    <isoform>
        <id>Q3UGF1-3</id>
        <name>3</name>
        <sequence type="described" ref="VSP_018076 VSP_018077"/>
    </isoform>
</comment>
<comment type="tissue specificity">
    <text evidence="2 3">Tissue-specific expression of isoforms (PubMed:12906858). Expressed in the prostate, testis, epididymis, submaxillary and salivary glands (PubMed:12906858). Expressed in ependymal cells lining brain ventricles (at protein level) (PubMed:16957054).</text>
</comment>
<comment type="sequence caution" evidence="10">
    <conflict type="frameshift">
        <sequence resource="EMBL-CDS" id="AAH46432"/>
    </conflict>
</comment>
<gene>
    <name evidence="12" type="primary">Wdr19</name>
    <name evidence="9" type="synonym">Ift144</name>
    <name type="synonym">Kiaa1638</name>
</gene>
<dbReference type="EMBL" id="AY029258">
    <property type="protein sequence ID" value="AAK38746.1"/>
    <property type="molecule type" value="mRNA"/>
</dbReference>
<dbReference type="EMBL" id="AK052303">
    <property type="protein sequence ID" value="BAC34929.1"/>
    <property type="molecule type" value="mRNA"/>
</dbReference>
<dbReference type="EMBL" id="AK147970">
    <property type="protein sequence ID" value="BAE28258.1"/>
    <property type="molecule type" value="mRNA"/>
</dbReference>
<dbReference type="EMBL" id="AK129413">
    <property type="protein sequence ID" value="BAC98223.2"/>
    <property type="molecule type" value="Transcribed_RNA"/>
</dbReference>
<dbReference type="EMBL" id="BC046432">
    <property type="protein sequence ID" value="AAH46432.1"/>
    <property type="status" value="ALT_SEQ"/>
    <property type="molecule type" value="mRNA"/>
</dbReference>
<dbReference type="CCDS" id="CCDS51509.1">
    <molecule id="Q3UGF1-1"/>
</dbReference>
<dbReference type="RefSeq" id="NP_001346808.1">
    <molecule id="Q3UGF1-1"/>
    <property type="nucleotide sequence ID" value="NM_001359879.1"/>
</dbReference>
<dbReference type="RefSeq" id="NP_001346809.1">
    <molecule id="Q3UGF1-3"/>
    <property type="nucleotide sequence ID" value="NM_001359880.1"/>
</dbReference>
<dbReference type="RefSeq" id="NP_700440.2">
    <molecule id="Q3UGF1-1"/>
    <property type="nucleotide sequence ID" value="NM_153391.2"/>
</dbReference>
<dbReference type="RefSeq" id="XP_011239015.1">
    <property type="nucleotide sequence ID" value="XM_011240713.1"/>
</dbReference>
<dbReference type="SMR" id="Q3UGF1"/>
<dbReference type="BioGRID" id="229398">
    <property type="interactions" value="4"/>
</dbReference>
<dbReference type="ComplexPortal" id="CPX-5027">
    <property type="entry name" value="Intraflagellar transport complex A"/>
</dbReference>
<dbReference type="DIP" id="DIP-61859N"/>
<dbReference type="FunCoup" id="Q3UGF1">
    <property type="interactions" value="646"/>
</dbReference>
<dbReference type="IntAct" id="Q3UGF1">
    <property type="interactions" value="1"/>
</dbReference>
<dbReference type="STRING" id="10090.ENSMUSP00000144866"/>
<dbReference type="GlyGen" id="Q3UGF1">
    <property type="glycosylation" value="1 site, 1 N-linked glycan (1 site)"/>
</dbReference>
<dbReference type="iPTMnet" id="Q3UGF1"/>
<dbReference type="PhosphoSitePlus" id="Q3UGF1"/>
<dbReference type="SwissPalm" id="Q3UGF1"/>
<dbReference type="PaxDb" id="10090-ENSMUSP00000038098"/>
<dbReference type="PeptideAtlas" id="Q3UGF1"/>
<dbReference type="ProteomicsDB" id="297637">
    <molecule id="Q3UGF1-1"/>
</dbReference>
<dbReference type="ProteomicsDB" id="297638">
    <molecule id="Q3UGF1-2"/>
</dbReference>
<dbReference type="ProteomicsDB" id="297639">
    <molecule id="Q3UGF1-3"/>
</dbReference>
<dbReference type="Pumba" id="Q3UGF1"/>
<dbReference type="Antibodypedia" id="23402">
    <property type="antibodies" value="123 antibodies from 20 providers"/>
</dbReference>
<dbReference type="DNASU" id="213081"/>
<dbReference type="Ensembl" id="ENSMUST00000041892.13">
    <molecule id="Q3UGF1-1"/>
    <property type="protein sequence ID" value="ENSMUSP00000038098.9"/>
    <property type="gene ID" value="ENSMUSG00000037890.14"/>
</dbReference>
<dbReference type="Ensembl" id="ENSMUST00000203653.3">
    <molecule id="Q3UGF1-1"/>
    <property type="protein sequence ID" value="ENSMUSP00000144866.2"/>
    <property type="gene ID" value="ENSMUSG00000037890.14"/>
</dbReference>
<dbReference type="GeneID" id="213081"/>
<dbReference type="KEGG" id="mmu:213081"/>
<dbReference type="UCSC" id="uc008xne.1">
    <molecule id="Q3UGF1-1"/>
    <property type="organism name" value="mouse"/>
</dbReference>
<dbReference type="UCSC" id="uc008xnf.1">
    <molecule id="Q3UGF1-3"/>
    <property type="organism name" value="mouse"/>
</dbReference>
<dbReference type="AGR" id="MGI:2443231"/>
<dbReference type="CTD" id="57728"/>
<dbReference type="MGI" id="MGI:2443231">
    <property type="gene designation" value="Wdr19"/>
</dbReference>
<dbReference type="VEuPathDB" id="HostDB:ENSMUSG00000037890"/>
<dbReference type="eggNOG" id="KOG2247">
    <property type="taxonomic scope" value="Eukaryota"/>
</dbReference>
<dbReference type="GeneTree" id="ENSGT00590000083165"/>
<dbReference type="HOGENOM" id="CLU_003002_2_0_1"/>
<dbReference type="InParanoid" id="Q3UGF1"/>
<dbReference type="OMA" id="NDMLTHT"/>
<dbReference type="OrthoDB" id="10250638at2759"/>
<dbReference type="PhylomeDB" id="Q3UGF1"/>
<dbReference type="TreeFam" id="TF314758"/>
<dbReference type="Reactome" id="R-MMU-5610787">
    <property type="pathway name" value="Hedgehog 'off' state"/>
</dbReference>
<dbReference type="Reactome" id="R-MMU-5620924">
    <property type="pathway name" value="Intraflagellar transport"/>
</dbReference>
<dbReference type="BioGRID-ORCS" id="213081">
    <property type="hits" value="5 hits in 77 CRISPR screens"/>
</dbReference>
<dbReference type="ChiTaRS" id="Wdr19">
    <property type="organism name" value="mouse"/>
</dbReference>
<dbReference type="PRO" id="PR:Q3UGF1"/>
<dbReference type="Proteomes" id="UP000000589">
    <property type="component" value="Chromosome 5"/>
</dbReference>
<dbReference type="RNAct" id="Q3UGF1">
    <property type="molecule type" value="protein"/>
</dbReference>
<dbReference type="Bgee" id="ENSMUSG00000037890">
    <property type="expression patterns" value="Expressed in spermatocyte and 199 other cell types or tissues"/>
</dbReference>
<dbReference type="ExpressionAtlas" id="Q3UGF1">
    <property type="expression patterns" value="baseline and differential"/>
</dbReference>
<dbReference type="GO" id="GO:0005929">
    <property type="term" value="C:cilium"/>
    <property type="evidence" value="ECO:0000314"/>
    <property type="project" value="MGI"/>
</dbReference>
<dbReference type="GO" id="GO:0005737">
    <property type="term" value="C:cytoplasm"/>
    <property type="evidence" value="ECO:0007669"/>
    <property type="project" value="UniProtKB-KW"/>
</dbReference>
<dbReference type="GO" id="GO:0005856">
    <property type="term" value="C:cytoskeleton"/>
    <property type="evidence" value="ECO:0007669"/>
    <property type="project" value="UniProtKB-KW"/>
</dbReference>
<dbReference type="GO" id="GO:0030991">
    <property type="term" value="C:intraciliary transport particle A"/>
    <property type="evidence" value="ECO:0000314"/>
    <property type="project" value="MGI"/>
</dbReference>
<dbReference type="GO" id="GO:0031514">
    <property type="term" value="C:motile cilium"/>
    <property type="evidence" value="ECO:0000314"/>
    <property type="project" value="UniProtKB"/>
</dbReference>
<dbReference type="GO" id="GO:0097730">
    <property type="term" value="C:non-motile cilium"/>
    <property type="evidence" value="ECO:0000314"/>
    <property type="project" value="UniProtKB"/>
</dbReference>
<dbReference type="GO" id="GO:0032391">
    <property type="term" value="C:photoreceptor connecting cilium"/>
    <property type="evidence" value="ECO:0000314"/>
    <property type="project" value="UniProtKB"/>
</dbReference>
<dbReference type="GO" id="GO:0001750">
    <property type="term" value="C:photoreceptor outer segment"/>
    <property type="evidence" value="ECO:0007669"/>
    <property type="project" value="UniProtKB-SubCell"/>
</dbReference>
<dbReference type="GO" id="GO:0005886">
    <property type="term" value="C:plasma membrane"/>
    <property type="evidence" value="ECO:0007669"/>
    <property type="project" value="GOC"/>
</dbReference>
<dbReference type="GO" id="GO:0000902">
    <property type="term" value="P:cell morphogenesis"/>
    <property type="evidence" value="ECO:0000315"/>
    <property type="project" value="MGI"/>
</dbReference>
<dbReference type="GO" id="GO:0060271">
    <property type="term" value="P:cilium assembly"/>
    <property type="evidence" value="ECO:0000315"/>
    <property type="project" value="MGI"/>
</dbReference>
<dbReference type="GO" id="GO:0055123">
    <property type="term" value="P:digestive system development"/>
    <property type="evidence" value="ECO:0000315"/>
    <property type="project" value="MGI"/>
</dbReference>
<dbReference type="GO" id="GO:0042471">
    <property type="term" value="P:ear morphogenesis"/>
    <property type="evidence" value="ECO:0000315"/>
    <property type="project" value="MGI"/>
</dbReference>
<dbReference type="GO" id="GO:0031076">
    <property type="term" value="P:embryonic camera-type eye development"/>
    <property type="evidence" value="ECO:0000315"/>
    <property type="project" value="MGI"/>
</dbReference>
<dbReference type="GO" id="GO:0048701">
    <property type="term" value="P:embryonic cranial skeleton morphogenesis"/>
    <property type="evidence" value="ECO:0000315"/>
    <property type="project" value="MGI"/>
</dbReference>
<dbReference type="GO" id="GO:0030326">
    <property type="term" value="P:embryonic limb morphogenesis"/>
    <property type="evidence" value="ECO:0000315"/>
    <property type="project" value="MGI"/>
</dbReference>
<dbReference type="GO" id="GO:0008406">
    <property type="term" value="P:gonad development"/>
    <property type="evidence" value="ECO:0000315"/>
    <property type="project" value="MGI"/>
</dbReference>
<dbReference type="GO" id="GO:0001701">
    <property type="term" value="P:in utero embryonic development"/>
    <property type="evidence" value="ECO:0000315"/>
    <property type="project" value="MGI"/>
</dbReference>
<dbReference type="GO" id="GO:0035721">
    <property type="term" value="P:intraciliary retrograde transport"/>
    <property type="evidence" value="ECO:0000266"/>
    <property type="project" value="MGI"/>
</dbReference>
<dbReference type="GO" id="GO:0061055">
    <property type="term" value="P:myotome development"/>
    <property type="evidence" value="ECO:0000315"/>
    <property type="project" value="MGI"/>
</dbReference>
<dbReference type="GO" id="GO:0050877">
    <property type="term" value="P:nervous system process"/>
    <property type="evidence" value="ECO:0000315"/>
    <property type="project" value="MGI"/>
</dbReference>
<dbReference type="GO" id="GO:1903441">
    <property type="term" value="P:protein localization to ciliary membrane"/>
    <property type="evidence" value="ECO:0000250"/>
    <property type="project" value="UniProtKB"/>
</dbReference>
<dbReference type="GO" id="GO:0061512">
    <property type="term" value="P:protein localization to cilium"/>
    <property type="evidence" value="ECO:0000266"/>
    <property type="project" value="MGI"/>
</dbReference>
<dbReference type="GO" id="GO:0065003">
    <property type="term" value="P:protein-containing complex assembly"/>
    <property type="evidence" value="ECO:0000250"/>
    <property type="project" value="UniProtKB"/>
</dbReference>
<dbReference type="GO" id="GO:0043113">
    <property type="term" value="P:receptor clustering"/>
    <property type="evidence" value="ECO:0000316"/>
    <property type="project" value="MGI"/>
</dbReference>
<dbReference type="GO" id="GO:0007224">
    <property type="term" value="P:smoothened signaling pathway"/>
    <property type="evidence" value="ECO:0000315"/>
    <property type="project" value="MGI"/>
</dbReference>
<dbReference type="GO" id="GO:0060831">
    <property type="term" value="P:smoothened signaling pathway involved in dorsal/ventral neural tube patterning"/>
    <property type="evidence" value="ECO:0000315"/>
    <property type="project" value="MGI"/>
</dbReference>
<dbReference type="FunFam" id="2.130.10.10:FF:000242">
    <property type="entry name" value="WD repeat domain 19, isoform CRA_a"/>
    <property type="match status" value="1"/>
</dbReference>
<dbReference type="FunFam" id="1.25.40.470:FF:000006">
    <property type="entry name" value="WD repeat-containing protein 19 isoform X1"/>
    <property type="match status" value="1"/>
</dbReference>
<dbReference type="FunFam" id="1.25.40.470:FF:000009">
    <property type="entry name" value="WD repeat-containing protein 19 isoform X1"/>
    <property type="match status" value="1"/>
</dbReference>
<dbReference type="Gene3D" id="1.25.40.470">
    <property type="match status" value="2"/>
</dbReference>
<dbReference type="Gene3D" id="2.130.10.10">
    <property type="entry name" value="YVTN repeat-like/Quinoprotein amine dehydrogenase"/>
    <property type="match status" value="1"/>
</dbReference>
<dbReference type="InterPro" id="IPR011990">
    <property type="entry name" value="TPR-like_helical_dom_sf"/>
</dbReference>
<dbReference type="InterPro" id="IPR056168">
    <property type="entry name" value="TPR_IF140/IFT172/WDR19"/>
</dbReference>
<dbReference type="InterPro" id="IPR015943">
    <property type="entry name" value="WD40/YVTN_repeat-like_dom_sf"/>
</dbReference>
<dbReference type="InterPro" id="IPR001680">
    <property type="entry name" value="WD40_rpt"/>
</dbReference>
<dbReference type="InterPro" id="IPR040379">
    <property type="entry name" value="WDR19/dyf-2"/>
</dbReference>
<dbReference type="InterPro" id="IPR039468">
    <property type="entry name" value="WDR19_WD40_rpt"/>
</dbReference>
<dbReference type="InterPro" id="IPR056170">
    <property type="entry name" value="Znf_IFT121-like"/>
</dbReference>
<dbReference type="PANTHER" id="PTHR14920">
    <property type="entry name" value="OSMOTIC AVOIDANCE ABNORMAL PROTEIN 1/WD REPEAT MEMBRANE PROTEIN"/>
    <property type="match status" value="1"/>
</dbReference>
<dbReference type="PANTHER" id="PTHR14920:SF2">
    <property type="entry name" value="WD REPEAT-CONTAINING PROTEIN 19"/>
    <property type="match status" value="1"/>
</dbReference>
<dbReference type="Pfam" id="PF23389">
    <property type="entry name" value="Beta-prop_WDR19_1st"/>
    <property type="match status" value="1"/>
</dbReference>
<dbReference type="Pfam" id="PF15911">
    <property type="entry name" value="Beta-prop_WDR19_2nd"/>
    <property type="match status" value="1"/>
</dbReference>
<dbReference type="Pfam" id="PF24762">
    <property type="entry name" value="TPR_IF140-IFT172"/>
    <property type="match status" value="1"/>
</dbReference>
<dbReference type="Pfam" id="PF23145">
    <property type="entry name" value="Zf_2nd_IFT121"/>
    <property type="match status" value="1"/>
</dbReference>
<dbReference type="Pfam" id="PF23146">
    <property type="entry name" value="Zf_IFT144_1st"/>
    <property type="match status" value="1"/>
</dbReference>
<dbReference type="SMART" id="SM00320">
    <property type="entry name" value="WD40"/>
    <property type="match status" value="5"/>
</dbReference>
<dbReference type="SUPFAM" id="SSF82171">
    <property type="entry name" value="DPP6 N-terminal domain-like"/>
    <property type="match status" value="1"/>
</dbReference>
<dbReference type="SUPFAM" id="SSF48452">
    <property type="entry name" value="TPR-like"/>
    <property type="match status" value="1"/>
</dbReference>
<dbReference type="SUPFAM" id="SSF69322">
    <property type="entry name" value="Tricorn protease domain 2"/>
    <property type="match status" value="1"/>
</dbReference>
<dbReference type="PROSITE" id="PS50294">
    <property type="entry name" value="WD_REPEATS_REGION"/>
    <property type="match status" value="1"/>
</dbReference>
<accession>Q3UGF1</accession>
<accession>Q6ZPK8</accession>
<accession>Q80VQ6</accession>
<accession>Q8C794</accession>
<accession>Q8K3R5</accession>
<keyword id="KW-0025">Alternative splicing</keyword>
<keyword id="KW-0966">Cell projection</keyword>
<keyword id="KW-0969">Cilium</keyword>
<keyword id="KW-0970">Cilium biogenesis/degradation</keyword>
<keyword id="KW-0963">Cytoplasm</keyword>
<keyword id="KW-0206">Cytoskeleton</keyword>
<keyword id="KW-0282">Flagellum</keyword>
<keyword id="KW-1185">Reference proteome</keyword>
<keyword id="KW-0677">Repeat</keyword>
<keyword id="KW-0802">TPR repeat</keyword>
<keyword id="KW-0853">WD repeat</keyword>
<name>WDR19_MOUSE</name>
<feature type="chain" id="PRO_0000233157" description="WD repeat-containing protein 19">
    <location>
        <begin position="1"/>
        <end position="1341"/>
    </location>
</feature>
<feature type="repeat" description="WD 1">
    <location>
        <begin position="11"/>
        <end position="51"/>
    </location>
</feature>
<feature type="repeat" description="WD 2">
    <location>
        <begin position="52"/>
        <end position="92"/>
    </location>
</feature>
<feature type="repeat" description="WD 3">
    <location>
        <begin position="95"/>
        <end position="134"/>
    </location>
</feature>
<feature type="repeat" description="WD 4">
    <location>
        <begin position="137"/>
        <end position="175"/>
    </location>
</feature>
<feature type="repeat" description="WD 5">
    <location>
        <begin position="273"/>
        <end position="311"/>
    </location>
</feature>
<feature type="repeat" description="WD 6">
    <location>
        <begin position="317"/>
        <end position="356"/>
    </location>
</feature>
<feature type="repeat" description="TPR 1">
    <location>
        <begin position="736"/>
        <end position="769"/>
    </location>
</feature>
<feature type="repeat" description="TPR 2">
    <location>
        <begin position="775"/>
        <end position="808"/>
    </location>
</feature>
<feature type="repeat" description="TPR 3">
    <location>
        <begin position="840"/>
        <end position="873"/>
    </location>
</feature>
<feature type="repeat" description="TPR 4">
    <location>
        <begin position="895"/>
        <end position="928"/>
    </location>
</feature>
<feature type="repeat" description="TPR 5">
    <location>
        <begin position="951"/>
        <end position="984"/>
    </location>
</feature>
<feature type="repeat" description="TPR 6">
    <location>
        <begin position="1020"/>
        <end position="1053"/>
    </location>
</feature>
<feature type="splice variant" id="VSP_018075" description="In isoform 2." evidence="8">
    <location>
        <begin position="1"/>
        <end position="59"/>
    </location>
</feature>
<feature type="splice variant" id="VSP_018076" description="In isoform 3." evidence="7">
    <original>AEDTTNEDYQSIALYFEGEK</original>
    <variation>KCCYLPYFLINMCYHRNPDS</variation>
    <location>
        <begin position="1002"/>
        <end position="1021"/>
    </location>
</feature>
<feature type="splice variant" id="VSP_018077" description="In isoform 3." evidence="7">
    <location>
        <begin position="1022"/>
        <end position="1341"/>
    </location>
</feature>
<feature type="mutagenesis site" description="Reduced interaction with BBS1." evidence="5">
    <original>G</original>
    <variation>R</variation>
    <location>
        <position position="341"/>
    </location>
</feature>
<feature type="sequence conflict" description="In Ref. 1; AAK38746." evidence="10" ref="1">
    <original>KK</original>
    <variation>RE</variation>
    <location>
        <begin position="1231"/>
        <end position="1232"/>
    </location>
</feature>
<feature type="sequence conflict" description="In Ref. 1; AAK38746." evidence="10" ref="1">
    <original>Q</original>
    <variation>K</variation>
    <location>
        <position position="1257"/>
    </location>
</feature>
<feature type="sequence conflict" description="In Ref. 1; AAK38746." evidence="10" ref="1">
    <original>P</original>
    <variation>S</variation>
    <location>
        <position position="1261"/>
    </location>
</feature>